<protein>
    <recommendedName>
        <fullName evidence="1">Large ribosomal subunit protein bL34</fullName>
    </recommendedName>
    <alternativeName>
        <fullName evidence="3">50S ribosomal protein L34</fullName>
    </alternativeName>
</protein>
<dbReference type="EMBL" id="AM884177">
    <property type="protein sequence ID" value="CAP06552.1"/>
    <property type="molecule type" value="Genomic_DNA"/>
</dbReference>
<dbReference type="RefSeq" id="WP_010725344.1">
    <property type="nucleotide sequence ID" value="NC_010280.2"/>
</dbReference>
<dbReference type="SMR" id="B0BAP0"/>
<dbReference type="GeneID" id="93065660"/>
<dbReference type="KEGG" id="ctl:CTLon_0154"/>
<dbReference type="HOGENOM" id="CLU_129938_2_1_0"/>
<dbReference type="Proteomes" id="UP001154401">
    <property type="component" value="Chromosome"/>
</dbReference>
<dbReference type="GO" id="GO:1990904">
    <property type="term" value="C:ribonucleoprotein complex"/>
    <property type="evidence" value="ECO:0007669"/>
    <property type="project" value="UniProtKB-KW"/>
</dbReference>
<dbReference type="GO" id="GO:0005840">
    <property type="term" value="C:ribosome"/>
    <property type="evidence" value="ECO:0007669"/>
    <property type="project" value="UniProtKB-KW"/>
</dbReference>
<dbReference type="GO" id="GO:0003735">
    <property type="term" value="F:structural constituent of ribosome"/>
    <property type="evidence" value="ECO:0007669"/>
    <property type="project" value="InterPro"/>
</dbReference>
<dbReference type="GO" id="GO:0006412">
    <property type="term" value="P:translation"/>
    <property type="evidence" value="ECO:0007669"/>
    <property type="project" value="UniProtKB-UniRule"/>
</dbReference>
<dbReference type="FunFam" id="1.10.287.3980:FF:000001">
    <property type="entry name" value="Mitochondrial ribosomal protein L34"/>
    <property type="match status" value="1"/>
</dbReference>
<dbReference type="Gene3D" id="1.10.287.3980">
    <property type="match status" value="1"/>
</dbReference>
<dbReference type="HAMAP" id="MF_00391">
    <property type="entry name" value="Ribosomal_bL34"/>
    <property type="match status" value="1"/>
</dbReference>
<dbReference type="InterPro" id="IPR000271">
    <property type="entry name" value="Ribosomal_bL34"/>
</dbReference>
<dbReference type="InterPro" id="IPR020939">
    <property type="entry name" value="Ribosomal_bL34_CS"/>
</dbReference>
<dbReference type="NCBIfam" id="TIGR01030">
    <property type="entry name" value="rpmH_bact"/>
    <property type="match status" value="1"/>
</dbReference>
<dbReference type="PANTHER" id="PTHR14503:SF4">
    <property type="entry name" value="LARGE RIBOSOMAL SUBUNIT PROTEIN BL34M"/>
    <property type="match status" value="1"/>
</dbReference>
<dbReference type="PANTHER" id="PTHR14503">
    <property type="entry name" value="MITOCHONDRIAL RIBOSOMAL PROTEIN 34 FAMILY MEMBER"/>
    <property type="match status" value="1"/>
</dbReference>
<dbReference type="Pfam" id="PF00468">
    <property type="entry name" value="Ribosomal_L34"/>
    <property type="match status" value="1"/>
</dbReference>
<dbReference type="PROSITE" id="PS00784">
    <property type="entry name" value="RIBOSOMAL_L34"/>
    <property type="match status" value="1"/>
</dbReference>
<gene>
    <name evidence="1" type="primary">rpmH</name>
    <name type="ordered locus">CTLon_0154</name>
</gene>
<feature type="chain" id="PRO_1000196020" description="Large ribosomal subunit protein bL34">
    <location>
        <begin position="1"/>
        <end position="45"/>
    </location>
</feature>
<feature type="region of interest" description="Disordered" evidence="2">
    <location>
        <begin position="1"/>
        <end position="45"/>
    </location>
</feature>
<feature type="compositionally biased region" description="Basic residues" evidence="2">
    <location>
        <begin position="1"/>
        <end position="14"/>
    </location>
</feature>
<feature type="compositionally biased region" description="Basic residues" evidence="2">
    <location>
        <begin position="31"/>
        <end position="45"/>
    </location>
</feature>
<proteinExistence type="inferred from homology"/>
<name>RL34_CHLTB</name>
<reference key="1">
    <citation type="journal article" date="2008" name="Genome Res.">
        <title>Chlamydia trachomatis: genome sequence analysis of lymphogranuloma venereum isolates.</title>
        <authorList>
            <person name="Thomson N.R."/>
            <person name="Holden M.T.G."/>
            <person name="Carder C."/>
            <person name="Lennard N."/>
            <person name="Lockey S.J."/>
            <person name="Marsh P."/>
            <person name="Skipp P."/>
            <person name="O'Connor C.D."/>
            <person name="Goodhead I."/>
            <person name="Norbertzcak H."/>
            <person name="Harris B."/>
            <person name="Ormond D."/>
            <person name="Rance R."/>
            <person name="Quail M.A."/>
            <person name="Parkhill J."/>
            <person name="Stephens R.S."/>
            <person name="Clarke I.N."/>
        </authorList>
    </citation>
    <scope>NUCLEOTIDE SEQUENCE [LARGE SCALE GENOMIC DNA]</scope>
    <source>
        <strain>UCH-1/proctitis</strain>
    </source>
</reference>
<keyword id="KW-0687">Ribonucleoprotein</keyword>
<keyword id="KW-0689">Ribosomal protein</keyword>
<sequence length="45" mass="5463">MKRTYQPSKRKRRNSVGFRARMATKSGRNLLNRRRRHGRHSLIDL</sequence>
<accession>B0BAP0</accession>
<organism>
    <name type="scientific">Chlamydia trachomatis serovar L2b (strain UCH-1/proctitis)</name>
    <dbReference type="NCBI Taxonomy" id="471473"/>
    <lineage>
        <taxon>Bacteria</taxon>
        <taxon>Pseudomonadati</taxon>
        <taxon>Chlamydiota</taxon>
        <taxon>Chlamydiia</taxon>
        <taxon>Chlamydiales</taxon>
        <taxon>Chlamydiaceae</taxon>
        <taxon>Chlamydia/Chlamydophila group</taxon>
        <taxon>Chlamydia</taxon>
    </lineage>
</organism>
<evidence type="ECO:0000255" key="1">
    <source>
        <dbReference type="HAMAP-Rule" id="MF_00391"/>
    </source>
</evidence>
<evidence type="ECO:0000256" key="2">
    <source>
        <dbReference type="SAM" id="MobiDB-lite"/>
    </source>
</evidence>
<evidence type="ECO:0000305" key="3"/>
<comment type="similarity">
    <text evidence="1">Belongs to the bacterial ribosomal protein bL34 family.</text>
</comment>